<evidence type="ECO:0000255" key="1">
    <source>
        <dbReference type="HAMAP-Rule" id="MF_00193"/>
    </source>
</evidence>
<name>NADE_SHEPA</name>
<accession>A8H3E4</accession>
<dbReference type="EC" id="6.3.1.5" evidence="1"/>
<dbReference type="EMBL" id="CP000851">
    <property type="protein sequence ID" value="ABV87081.1"/>
    <property type="molecule type" value="Genomic_DNA"/>
</dbReference>
<dbReference type="RefSeq" id="WP_012155001.1">
    <property type="nucleotide sequence ID" value="NC_009901.1"/>
</dbReference>
<dbReference type="SMR" id="A8H3E4"/>
<dbReference type="STRING" id="398579.Spea_1758"/>
<dbReference type="KEGG" id="spl:Spea_1758"/>
<dbReference type="eggNOG" id="COG0171">
    <property type="taxonomic scope" value="Bacteria"/>
</dbReference>
<dbReference type="HOGENOM" id="CLU_059327_3_0_6"/>
<dbReference type="OrthoDB" id="3266517at2"/>
<dbReference type="UniPathway" id="UPA00253">
    <property type="reaction ID" value="UER00333"/>
</dbReference>
<dbReference type="Proteomes" id="UP000002608">
    <property type="component" value="Chromosome"/>
</dbReference>
<dbReference type="GO" id="GO:0005737">
    <property type="term" value="C:cytoplasm"/>
    <property type="evidence" value="ECO:0007669"/>
    <property type="project" value="InterPro"/>
</dbReference>
<dbReference type="GO" id="GO:0005524">
    <property type="term" value="F:ATP binding"/>
    <property type="evidence" value="ECO:0007669"/>
    <property type="project" value="UniProtKB-UniRule"/>
</dbReference>
<dbReference type="GO" id="GO:0004359">
    <property type="term" value="F:glutaminase activity"/>
    <property type="evidence" value="ECO:0007669"/>
    <property type="project" value="InterPro"/>
</dbReference>
<dbReference type="GO" id="GO:0046872">
    <property type="term" value="F:metal ion binding"/>
    <property type="evidence" value="ECO:0007669"/>
    <property type="project" value="UniProtKB-KW"/>
</dbReference>
<dbReference type="GO" id="GO:0003952">
    <property type="term" value="F:NAD+ synthase (glutamine-hydrolyzing) activity"/>
    <property type="evidence" value="ECO:0007669"/>
    <property type="project" value="InterPro"/>
</dbReference>
<dbReference type="GO" id="GO:0008795">
    <property type="term" value="F:NAD+ synthase activity"/>
    <property type="evidence" value="ECO:0007669"/>
    <property type="project" value="UniProtKB-UniRule"/>
</dbReference>
<dbReference type="GO" id="GO:0009435">
    <property type="term" value="P:NAD biosynthetic process"/>
    <property type="evidence" value="ECO:0007669"/>
    <property type="project" value="UniProtKB-UniRule"/>
</dbReference>
<dbReference type="CDD" id="cd00553">
    <property type="entry name" value="NAD_synthase"/>
    <property type="match status" value="1"/>
</dbReference>
<dbReference type="FunFam" id="3.40.50.620:FF:000015">
    <property type="entry name" value="NH(3)-dependent NAD(+) synthetase"/>
    <property type="match status" value="1"/>
</dbReference>
<dbReference type="Gene3D" id="3.40.50.620">
    <property type="entry name" value="HUPs"/>
    <property type="match status" value="1"/>
</dbReference>
<dbReference type="HAMAP" id="MF_00193">
    <property type="entry name" value="NadE_ammonia_dep"/>
    <property type="match status" value="1"/>
</dbReference>
<dbReference type="InterPro" id="IPR022310">
    <property type="entry name" value="NAD/GMP_synthase"/>
</dbReference>
<dbReference type="InterPro" id="IPR003694">
    <property type="entry name" value="NAD_synthase"/>
</dbReference>
<dbReference type="InterPro" id="IPR022926">
    <property type="entry name" value="NH(3)-dep_NAD(+)_synth"/>
</dbReference>
<dbReference type="InterPro" id="IPR014729">
    <property type="entry name" value="Rossmann-like_a/b/a_fold"/>
</dbReference>
<dbReference type="NCBIfam" id="TIGR00552">
    <property type="entry name" value="nadE"/>
    <property type="match status" value="1"/>
</dbReference>
<dbReference type="NCBIfam" id="NF001979">
    <property type="entry name" value="PRK00768.1"/>
    <property type="match status" value="1"/>
</dbReference>
<dbReference type="PANTHER" id="PTHR23090">
    <property type="entry name" value="NH 3 /GLUTAMINE-DEPENDENT NAD + SYNTHETASE"/>
    <property type="match status" value="1"/>
</dbReference>
<dbReference type="PANTHER" id="PTHR23090:SF7">
    <property type="entry name" value="NH(3)-DEPENDENT NAD(+) SYNTHETASE"/>
    <property type="match status" value="1"/>
</dbReference>
<dbReference type="Pfam" id="PF02540">
    <property type="entry name" value="NAD_synthase"/>
    <property type="match status" value="1"/>
</dbReference>
<dbReference type="SUPFAM" id="SSF52402">
    <property type="entry name" value="Adenine nucleotide alpha hydrolases-like"/>
    <property type="match status" value="1"/>
</dbReference>
<reference key="1">
    <citation type="submission" date="2007-10" db="EMBL/GenBank/DDBJ databases">
        <title>Complete sequence of Shewanella pealeana ATCC 700345.</title>
        <authorList>
            <consortium name="US DOE Joint Genome Institute"/>
            <person name="Copeland A."/>
            <person name="Lucas S."/>
            <person name="Lapidus A."/>
            <person name="Barry K."/>
            <person name="Glavina del Rio T."/>
            <person name="Dalin E."/>
            <person name="Tice H."/>
            <person name="Pitluck S."/>
            <person name="Chertkov O."/>
            <person name="Brettin T."/>
            <person name="Bruce D."/>
            <person name="Detter J.C."/>
            <person name="Han C."/>
            <person name="Schmutz J."/>
            <person name="Larimer F."/>
            <person name="Land M."/>
            <person name="Hauser L."/>
            <person name="Kyrpides N."/>
            <person name="Kim E."/>
            <person name="Zhao J.-S.Z."/>
            <person name="Manno D."/>
            <person name="Hawari J."/>
            <person name="Richardson P."/>
        </authorList>
    </citation>
    <scope>NUCLEOTIDE SEQUENCE [LARGE SCALE GENOMIC DNA]</scope>
    <source>
        <strain>ATCC 700345 / ANG-SQ1</strain>
    </source>
</reference>
<gene>
    <name evidence="1" type="primary">nadE</name>
    <name type="ordered locus">Spea_1758</name>
</gene>
<sequence>MKGQILREMKVLNAIDPGFEVQRRVAFIKSKLKQSSTSTLVLGISGGVDSSLAGRLCQLAVDELNSDASGNHYQFIAVRLPYDVQKDEDEAQLACQFIQPSKQVTVNVKQGVDGVHCETLAAVEAAGIALPEADKIDFVKGNVKARMRMVAQYEIAGLVAGLVVGTDHSAENITGFYTKWGDGACDLAPLFGLNKRQVRQLAAFLGAPDKLVIKAPTADLEENKPQLEDEVALGLTYEQIDDFLEGKEVSEFVNDKLVGIYRATQHKREPIPTIYD</sequence>
<organism>
    <name type="scientific">Shewanella pealeana (strain ATCC 700345 / ANG-SQ1)</name>
    <dbReference type="NCBI Taxonomy" id="398579"/>
    <lineage>
        <taxon>Bacteria</taxon>
        <taxon>Pseudomonadati</taxon>
        <taxon>Pseudomonadota</taxon>
        <taxon>Gammaproteobacteria</taxon>
        <taxon>Alteromonadales</taxon>
        <taxon>Shewanellaceae</taxon>
        <taxon>Shewanella</taxon>
    </lineage>
</organism>
<keyword id="KW-0067">ATP-binding</keyword>
<keyword id="KW-0436">Ligase</keyword>
<keyword id="KW-0460">Magnesium</keyword>
<keyword id="KW-0479">Metal-binding</keyword>
<keyword id="KW-0520">NAD</keyword>
<keyword id="KW-0547">Nucleotide-binding</keyword>
<keyword id="KW-1185">Reference proteome</keyword>
<feature type="chain" id="PRO_1000077604" description="NH(3)-dependent NAD(+) synthetase">
    <location>
        <begin position="1"/>
        <end position="276"/>
    </location>
</feature>
<feature type="binding site" evidence="1">
    <location>
        <begin position="43"/>
        <end position="50"/>
    </location>
    <ligand>
        <name>ATP</name>
        <dbReference type="ChEBI" id="CHEBI:30616"/>
    </ligand>
</feature>
<feature type="binding site" evidence="1">
    <location>
        <position position="49"/>
    </location>
    <ligand>
        <name>Mg(2+)</name>
        <dbReference type="ChEBI" id="CHEBI:18420"/>
    </ligand>
</feature>
<feature type="binding site" evidence="1">
    <location>
        <position position="146"/>
    </location>
    <ligand>
        <name>deamido-NAD(+)</name>
        <dbReference type="ChEBI" id="CHEBI:58437"/>
    </ligand>
</feature>
<feature type="binding site" evidence="1">
    <location>
        <position position="166"/>
    </location>
    <ligand>
        <name>ATP</name>
        <dbReference type="ChEBI" id="CHEBI:30616"/>
    </ligand>
</feature>
<feature type="binding site" evidence="1">
    <location>
        <position position="171"/>
    </location>
    <ligand>
        <name>Mg(2+)</name>
        <dbReference type="ChEBI" id="CHEBI:18420"/>
    </ligand>
</feature>
<feature type="binding site" evidence="1">
    <location>
        <position position="179"/>
    </location>
    <ligand>
        <name>deamido-NAD(+)</name>
        <dbReference type="ChEBI" id="CHEBI:58437"/>
    </ligand>
</feature>
<feature type="binding site" evidence="1">
    <location>
        <position position="186"/>
    </location>
    <ligand>
        <name>deamido-NAD(+)</name>
        <dbReference type="ChEBI" id="CHEBI:58437"/>
    </ligand>
</feature>
<feature type="binding site" evidence="1">
    <location>
        <position position="195"/>
    </location>
    <ligand>
        <name>ATP</name>
        <dbReference type="ChEBI" id="CHEBI:30616"/>
    </ligand>
</feature>
<feature type="binding site" evidence="1">
    <location>
        <position position="217"/>
    </location>
    <ligand>
        <name>ATP</name>
        <dbReference type="ChEBI" id="CHEBI:30616"/>
    </ligand>
</feature>
<feature type="binding site" evidence="1">
    <location>
        <begin position="266"/>
        <end position="267"/>
    </location>
    <ligand>
        <name>deamido-NAD(+)</name>
        <dbReference type="ChEBI" id="CHEBI:58437"/>
    </ligand>
</feature>
<proteinExistence type="inferred from homology"/>
<comment type="function">
    <text evidence="1">Catalyzes the ATP-dependent amidation of deamido-NAD to form NAD. Uses ammonia as a nitrogen source.</text>
</comment>
<comment type="catalytic activity">
    <reaction evidence="1">
        <text>deamido-NAD(+) + NH4(+) + ATP = AMP + diphosphate + NAD(+) + H(+)</text>
        <dbReference type="Rhea" id="RHEA:21188"/>
        <dbReference type="ChEBI" id="CHEBI:15378"/>
        <dbReference type="ChEBI" id="CHEBI:28938"/>
        <dbReference type="ChEBI" id="CHEBI:30616"/>
        <dbReference type="ChEBI" id="CHEBI:33019"/>
        <dbReference type="ChEBI" id="CHEBI:57540"/>
        <dbReference type="ChEBI" id="CHEBI:58437"/>
        <dbReference type="ChEBI" id="CHEBI:456215"/>
        <dbReference type="EC" id="6.3.1.5"/>
    </reaction>
</comment>
<comment type="pathway">
    <text evidence="1">Cofactor biosynthesis; NAD(+) biosynthesis; NAD(+) from deamido-NAD(+) (ammonia route): step 1/1.</text>
</comment>
<comment type="subunit">
    <text evidence="1">Homodimer.</text>
</comment>
<comment type="similarity">
    <text evidence="1">Belongs to the NAD synthetase family.</text>
</comment>
<protein>
    <recommendedName>
        <fullName evidence="1">NH(3)-dependent NAD(+) synthetase</fullName>
        <ecNumber evidence="1">6.3.1.5</ecNumber>
    </recommendedName>
</protein>